<sequence length="232" mass="25604">MIPTSFPPREEIARLTARMLLEIEAVHFRPQEPFTLASGLPSPTYIDCRKLISYPRIRSTLMDFMAVTLLRDAGFEAFDNIAGGETAGIPFAALVAERLGLPMTYVRKKPKGYGRNARIEGVMTEGQRVLLVEDLTTDGGSKLSFVDAIRETGASCAHTAVIFYYGIFPETIGRLQAHGVTLHHLCTWWDVLAEARASGTFDAGTLAEVESFLSNPRDWQDARKPADPTKSL</sequence>
<evidence type="ECO:0000255" key="1">
    <source>
        <dbReference type="HAMAP-Rule" id="MF_01208"/>
    </source>
</evidence>
<name>PYRE_CERS4</name>
<protein>
    <recommendedName>
        <fullName evidence="1">Orotate phosphoribosyltransferase</fullName>
        <shortName evidence="1">OPRT</shortName>
        <shortName evidence="1">OPRTase</shortName>
        <ecNumber evidence="1">2.4.2.10</ecNumber>
    </recommendedName>
</protein>
<proteinExistence type="inferred from homology"/>
<dbReference type="EC" id="2.4.2.10" evidence="1"/>
<dbReference type="EMBL" id="CP000143">
    <property type="protein sequence ID" value="ABA78079.1"/>
    <property type="molecule type" value="Genomic_DNA"/>
</dbReference>
<dbReference type="RefSeq" id="WP_011337086.1">
    <property type="nucleotide sequence ID" value="NC_007493.2"/>
</dbReference>
<dbReference type="RefSeq" id="YP_351980.1">
    <property type="nucleotide sequence ID" value="NC_007493.2"/>
</dbReference>
<dbReference type="SMR" id="Q3J555"/>
<dbReference type="STRING" id="272943.RSP_1929"/>
<dbReference type="EnsemblBacteria" id="ABA78079">
    <property type="protein sequence ID" value="ABA78079"/>
    <property type="gene ID" value="RSP_1929"/>
</dbReference>
<dbReference type="GeneID" id="3719238"/>
<dbReference type="KEGG" id="rsp:RSP_1929"/>
<dbReference type="PATRIC" id="fig|272943.9.peg.821"/>
<dbReference type="eggNOG" id="COG0461">
    <property type="taxonomic scope" value="Bacteria"/>
</dbReference>
<dbReference type="OrthoDB" id="9802134at2"/>
<dbReference type="PhylomeDB" id="Q3J555"/>
<dbReference type="UniPathway" id="UPA00070">
    <property type="reaction ID" value="UER00119"/>
</dbReference>
<dbReference type="Proteomes" id="UP000002703">
    <property type="component" value="Chromosome 1"/>
</dbReference>
<dbReference type="GO" id="GO:0000287">
    <property type="term" value="F:magnesium ion binding"/>
    <property type="evidence" value="ECO:0007669"/>
    <property type="project" value="UniProtKB-UniRule"/>
</dbReference>
<dbReference type="GO" id="GO:0004588">
    <property type="term" value="F:orotate phosphoribosyltransferase activity"/>
    <property type="evidence" value="ECO:0007669"/>
    <property type="project" value="UniProtKB-UniRule"/>
</dbReference>
<dbReference type="GO" id="GO:0044205">
    <property type="term" value="P:'de novo' UMP biosynthetic process"/>
    <property type="evidence" value="ECO:0007669"/>
    <property type="project" value="UniProtKB-UniRule"/>
</dbReference>
<dbReference type="GO" id="GO:0019856">
    <property type="term" value="P:pyrimidine nucleobase biosynthetic process"/>
    <property type="evidence" value="ECO:0007669"/>
    <property type="project" value="TreeGrafter"/>
</dbReference>
<dbReference type="CDD" id="cd06223">
    <property type="entry name" value="PRTases_typeI"/>
    <property type="match status" value="1"/>
</dbReference>
<dbReference type="Gene3D" id="3.40.50.2020">
    <property type="match status" value="1"/>
</dbReference>
<dbReference type="HAMAP" id="MF_01208">
    <property type="entry name" value="PyrE"/>
    <property type="match status" value="1"/>
</dbReference>
<dbReference type="InterPro" id="IPR023031">
    <property type="entry name" value="OPRT"/>
</dbReference>
<dbReference type="InterPro" id="IPR000836">
    <property type="entry name" value="PRibTrfase_dom"/>
</dbReference>
<dbReference type="InterPro" id="IPR029057">
    <property type="entry name" value="PRTase-like"/>
</dbReference>
<dbReference type="NCBIfam" id="NF001729">
    <property type="entry name" value="PRK00455.1-3"/>
    <property type="match status" value="1"/>
</dbReference>
<dbReference type="PANTHER" id="PTHR19278">
    <property type="entry name" value="OROTATE PHOSPHORIBOSYLTRANSFERASE"/>
    <property type="match status" value="1"/>
</dbReference>
<dbReference type="PANTHER" id="PTHR19278:SF9">
    <property type="entry name" value="URIDINE 5'-MONOPHOSPHATE SYNTHASE"/>
    <property type="match status" value="1"/>
</dbReference>
<dbReference type="Pfam" id="PF00156">
    <property type="entry name" value="Pribosyltran"/>
    <property type="match status" value="1"/>
</dbReference>
<dbReference type="SUPFAM" id="SSF53271">
    <property type="entry name" value="PRTase-like"/>
    <property type="match status" value="1"/>
</dbReference>
<feature type="chain" id="PRO_1000066287" description="Orotate phosphoribosyltransferase">
    <location>
        <begin position="1"/>
        <end position="232"/>
    </location>
</feature>
<feature type="binding site" evidence="1">
    <location>
        <position position="107"/>
    </location>
    <ligand>
        <name>5-phospho-alpha-D-ribose 1-diphosphate</name>
        <dbReference type="ChEBI" id="CHEBI:58017"/>
        <note>ligand shared between dimeric partners</note>
    </ligand>
</feature>
<feature type="binding site" description="in other chain" evidence="1">
    <location>
        <position position="108"/>
    </location>
    <ligand>
        <name>5-phospho-alpha-D-ribose 1-diphosphate</name>
        <dbReference type="ChEBI" id="CHEBI:58017"/>
        <note>ligand shared between dimeric partners</note>
    </ligand>
</feature>
<feature type="binding site" evidence="1">
    <location>
        <position position="111"/>
    </location>
    <ligand>
        <name>5-phospho-alpha-D-ribose 1-diphosphate</name>
        <dbReference type="ChEBI" id="CHEBI:58017"/>
        <note>ligand shared between dimeric partners</note>
    </ligand>
</feature>
<feature type="binding site" description="in other chain" evidence="1">
    <location>
        <begin position="133"/>
        <end position="141"/>
    </location>
    <ligand>
        <name>5-phospho-alpha-D-ribose 1-diphosphate</name>
        <dbReference type="ChEBI" id="CHEBI:58017"/>
        <note>ligand shared between dimeric partners</note>
    </ligand>
</feature>
<feature type="binding site" evidence="1">
    <location>
        <position position="137"/>
    </location>
    <ligand>
        <name>orotate</name>
        <dbReference type="ChEBI" id="CHEBI:30839"/>
    </ligand>
</feature>
<comment type="function">
    <text evidence="1">Catalyzes the transfer of a ribosyl phosphate group from 5-phosphoribose 1-diphosphate to orotate, leading to the formation of orotidine monophosphate (OMP).</text>
</comment>
<comment type="catalytic activity">
    <reaction evidence="1">
        <text>orotidine 5'-phosphate + diphosphate = orotate + 5-phospho-alpha-D-ribose 1-diphosphate</text>
        <dbReference type="Rhea" id="RHEA:10380"/>
        <dbReference type="ChEBI" id="CHEBI:30839"/>
        <dbReference type="ChEBI" id="CHEBI:33019"/>
        <dbReference type="ChEBI" id="CHEBI:57538"/>
        <dbReference type="ChEBI" id="CHEBI:58017"/>
        <dbReference type="EC" id="2.4.2.10"/>
    </reaction>
</comment>
<comment type="cofactor">
    <cofactor evidence="1">
        <name>Mg(2+)</name>
        <dbReference type="ChEBI" id="CHEBI:18420"/>
    </cofactor>
</comment>
<comment type="pathway">
    <text evidence="1">Pyrimidine metabolism; UMP biosynthesis via de novo pathway; UMP from orotate: step 1/2.</text>
</comment>
<comment type="subunit">
    <text evidence="1">Homodimer.</text>
</comment>
<comment type="similarity">
    <text evidence="1">Belongs to the purine/pyrimidine phosphoribosyltransferase family. PyrE subfamily.</text>
</comment>
<organism>
    <name type="scientific">Cereibacter sphaeroides (strain ATCC 17023 / DSM 158 / JCM 6121 / CCUG 31486 / LMG 2827 / NBRC 12203 / NCIMB 8253 / ATH 2.4.1.)</name>
    <name type="common">Rhodobacter sphaeroides</name>
    <dbReference type="NCBI Taxonomy" id="272943"/>
    <lineage>
        <taxon>Bacteria</taxon>
        <taxon>Pseudomonadati</taxon>
        <taxon>Pseudomonadota</taxon>
        <taxon>Alphaproteobacteria</taxon>
        <taxon>Rhodobacterales</taxon>
        <taxon>Paracoccaceae</taxon>
        <taxon>Cereibacter</taxon>
    </lineage>
</organism>
<keyword id="KW-0328">Glycosyltransferase</keyword>
<keyword id="KW-0460">Magnesium</keyword>
<keyword id="KW-0665">Pyrimidine biosynthesis</keyword>
<keyword id="KW-1185">Reference proteome</keyword>
<keyword id="KW-0808">Transferase</keyword>
<reference key="1">
    <citation type="submission" date="2005-09" db="EMBL/GenBank/DDBJ databases">
        <title>Complete sequence of chromosome 1 of Rhodobacter sphaeroides 2.4.1.</title>
        <authorList>
            <person name="Copeland A."/>
            <person name="Lucas S."/>
            <person name="Lapidus A."/>
            <person name="Barry K."/>
            <person name="Detter J.C."/>
            <person name="Glavina T."/>
            <person name="Hammon N."/>
            <person name="Israni S."/>
            <person name="Pitluck S."/>
            <person name="Richardson P."/>
            <person name="Mackenzie C."/>
            <person name="Choudhary M."/>
            <person name="Larimer F."/>
            <person name="Hauser L.J."/>
            <person name="Land M."/>
            <person name="Donohue T.J."/>
            <person name="Kaplan S."/>
        </authorList>
    </citation>
    <scope>NUCLEOTIDE SEQUENCE [LARGE SCALE GENOMIC DNA]</scope>
    <source>
        <strain>ATCC 17023 / DSM 158 / JCM 6121 / CCUG 31486 / LMG 2827 / NBRC 12203 / NCIMB 8253 / ATH 2.4.1.</strain>
    </source>
</reference>
<accession>Q3J555</accession>
<gene>
    <name evidence="1" type="primary">pyrE</name>
    <name type="ordered locus">RHOS4_05110</name>
    <name type="ORF">RSP_1929</name>
</gene>